<proteinExistence type="inferred from homology"/>
<feature type="chain" id="PRO_1000013249" description="Protein TusC">
    <location>
        <begin position="1"/>
        <end position="121"/>
    </location>
</feature>
<evidence type="ECO:0000255" key="1">
    <source>
        <dbReference type="HAMAP-Rule" id="MF_00389"/>
    </source>
</evidence>
<comment type="function">
    <text evidence="1">Part of a sulfur-relay system required for 2-thiolation of 5-methylaminomethyl-2-thiouridine (mnm(5)s(2)U) at tRNA wobble positions.</text>
</comment>
<comment type="subunit">
    <text evidence="1">Heterohexamer, formed by a dimer of trimers. The hexameric TusBCD complex contains 2 copies each of TusB, TusC and TusD. The TusBCD complex interacts with TusE.</text>
</comment>
<comment type="subcellular location">
    <subcellularLocation>
        <location evidence="1">Cytoplasm</location>
    </subcellularLocation>
</comment>
<comment type="similarity">
    <text evidence="1">Belongs to the DsrF/TusC family.</text>
</comment>
<protein>
    <recommendedName>
        <fullName evidence="1">Protein TusC</fullName>
    </recommendedName>
    <alternativeName>
        <fullName evidence="1">tRNA 2-thiouridine synthesizing protein C</fullName>
    </alternativeName>
</protein>
<name>TUSC_YERPP</name>
<sequence length="121" mass="13435">MARKRIAFIFTQGPHGSSAGREGLDALLATSALSEDIGVFFISDGVLQLLPQQQPEKILARNYIATFGVLPLYDVENCYLCERSLQQRGLSKMADWILDVTVLSPADLRRELGTYDVVLTF</sequence>
<gene>
    <name evidence="1" type="primary">tusC</name>
    <name type="ordered locus">YPDSF_0123</name>
</gene>
<dbReference type="EMBL" id="CP000668">
    <property type="protein sequence ID" value="ABP38545.1"/>
    <property type="molecule type" value="Genomic_DNA"/>
</dbReference>
<dbReference type="RefSeq" id="WP_002212321.1">
    <property type="nucleotide sequence ID" value="NZ_CP009715.1"/>
</dbReference>
<dbReference type="SMR" id="A4TGY2"/>
<dbReference type="GeneID" id="57974405"/>
<dbReference type="KEGG" id="ypp:YPDSF_0123"/>
<dbReference type="PATRIC" id="fig|386656.14.peg.444"/>
<dbReference type="GO" id="GO:0005737">
    <property type="term" value="C:cytoplasm"/>
    <property type="evidence" value="ECO:0007669"/>
    <property type="project" value="UniProtKB-SubCell"/>
</dbReference>
<dbReference type="GO" id="GO:0008033">
    <property type="term" value="P:tRNA processing"/>
    <property type="evidence" value="ECO:0007669"/>
    <property type="project" value="UniProtKB-UniRule"/>
</dbReference>
<dbReference type="Gene3D" id="3.40.1260.10">
    <property type="entry name" value="DsrEFH-like"/>
    <property type="match status" value="1"/>
</dbReference>
<dbReference type="HAMAP" id="MF_00389">
    <property type="entry name" value="Thiourid_synth_C"/>
    <property type="match status" value="1"/>
</dbReference>
<dbReference type="InterPro" id="IPR027396">
    <property type="entry name" value="DsrEFH-like"/>
</dbReference>
<dbReference type="InterPro" id="IPR003787">
    <property type="entry name" value="Sulphur_relay_DsrE/F-like"/>
</dbReference>
<dbReference type="InterPro" id="IPR037450">
    <property type="entry name" value="Sulphur_relay_TusC"/>
</dbReference>
<dbReference type="InterPro" id="IPR017462">
    <property type="entry name" value="Sulphur_relay_TusC/DsrF"/>
</dbReference>
<dbReference type="NCBIfam" id="NF001238">
    <property type="entry name" value="PRK00211.1"/>
    <property type="match status" value="1"/>
</dbReference>
<dbReference type="NCBIfam" id="TIGR03010">
    <property type="entry name" value="sulf_tusC_dsrF"/>
    <property type="match status" value="1"/>
</dbReference>
<dbReference type="PANTHER" id="PTHR38780">
    <property type="entry name" value="PROTEIN TUSC"/>
    <property type="match status" value="1"/>
</dbReference>
<dbReference type="PANTHER" id="PTHR38780:SF1">
    <property type="entry name" value="PROTEIN TUSC"/>
    <property type="match status" value="1"/>
</dbReference>
<dbReference type="Pfam" id="PF02635">
    <property type="entry name" value="DsrE"/>
    <property type="match status" value="1"/>
</dbReference>
<dbReference type="SUPFAM" id="SSF75169">
    <property type="entry name" value="DsrEFH-like"/>
    <property type="match status" value="1"/>
</dbReference>
<accession>A4TGY2</accession>
<organism>
    <name type="scientific">Yersinia pestis (strain Pestoides F)</name>
    <dbReference type="NCBI Taxonomy" id="386656"/>
    <lineage>
        <taxon>Bacteria</taxon>
        <taxon>Pseudomonadati</taxon>
        <taxon>Pseudomonadota</taxon>
        <taxon>Gammaproteobacteria</taxon>
        <taxon>Enterobacterales</taxon>
        <taxon>Yersiniaceae</taxon>
        <taxon>Yersinia</taxon>
    </lineage>
</organism>
<keyword id="KW-0963">Cytoplasm</keyword>
<keyword id="KW-0819">tRNA processing</keyword>
<reference key="1">
    <citation type="submission" date="2007-02" db="EMBL/GenBank/DDBJ databases">
        <title>Complete sequence of chromosome of Yersinia pestis Pestoides F.</title>
        <authorList>
            <consortium name="US DOE Joint Genome Institute"/>
            <person name="Copeland A."/>
            <person name="Lucas S."/>
            <person name="Lapidus A."/>
            <person name="Barry K."/>
            <person name="Detter J.C."/>
            <person name="Glavina del Rio T."/>
            <person name="Hammon N."/>
            <person name="Israni S."/>
            <person name="Dalin E."/>
            <person name="Tice H."/>
            <person name="Pitluck S."/>
            <person name="Di Bartolo G."/>
            <person name="Chain P."/>
            <person name="Malfatti S."/>
            <person name="Shin M."/>
            <person name="Vergez L."/>
            <person name="Schmutz J."/>
            <person name="Larimer F."/>
            <person name="Land M."/>
            <person name="Hauser L."/>
            <person name="Worsham P."/>
            <person name="Chu M."/>
            <person name="Bearden S."/>
            <person name="Garcia E."/>
            <person name="Richardson P."/>
        </authorList>
    </citation>
    <scope>NUCLEOTIDE SEQUENCE [LARGE SCALE GENOMIC DNA]</scope>
    <source>
        <strain>Pestoides F</strain>
    </source>
</reference>